<sequence>MARGPKKHLKRLNAPKAWMLDKLGGVYAPRPSTGPHKLRESLPLVIFLRNRLKYALTNSEVTKIVMQRLIKVDGKVRTDPNYPSGFMDVITIEKTGEFFRLIYDVKGRFTIHRITAEEAKYKLCKVKRVQTGPKGIPFLVTHDGRTIRYPDPIIKVNDTIQLEIANSKIMDSIKFDSGNLCMITGGRNLGRVGTVVNRERHPGSFDIVHIKDSQGHTFANRLNNVFIIGKGSKAYVSLPRGKGVKLSIAEERDKRLAAKTH</sequence>
<reference key="1">
    <citation type="submission" date="2005-06" db="EMBL/GenBank/DDBJ databases">
        <title>Ribosomal proteins of Coleoptera.</title>
        <authorList>
            <person name="Longhorn S.J."/>
            <person name="Vogler A.P."/>
        </authorList>
    </citation>
    <scope>NUCLEOTIDE SEQUENCE [MRNA]</scope>
</reference>
<gene>
    <name type="primary">RpS4</name>
</gene>
<accession>Q4GXU6</accession>
<protein>
    <recommendedName>
        <fullName evidence="1">Small ribosomal subunit protein eS4</fullName>
    </recommendedName>
    <alternativeName>
        <fullName>40S ribosomal protein S4</fullName>
    </alternativeName>
</protein>
<organism>
    <name type="scientific">Carabus granulatus</name>
    <name type="common">Ground beetle</name>
    <dbReference type="NCBI Taxonomy" id="118799"/>
    <lineage>
        <taxon>Eukaryota</taxon>
        <taxon>Metazoa</taxon>
        <taxon>Ecdysozoa</taxon>
        <taxon>Arthropoda</taxon>
        <taxon>Hexapoda</taxon>
        <taxon>Insecta</taxon>
        <taxon>Pterygota</taxon>
        <taxon>Neoptera</taxon>
        <taxon>Endopterygota</taxon>
        <taxon>Coleoptera</taxon>
        <taxon>Adephaga</taxon>
        <taxon>Caraboidea</taxon>
        <taxon>Carabidae</taxon>
        <taxon>Carabinae</taxon>
        <taxon>Carabini</taxon>
        <taxon>Carabina</taxon>
        <taxon>Carabus</taxon>
        <taxon>Carabus</taxon>
    </lineage>
</organism>
<comment type="similarity">
    <text evidence="1">Belongs to the eukaryotic ribosomal protein eS4 family.</text>
</comment>
<proteinExistence type="evidence at transcript level"/>
<keyword id="KW-0687">Ribonucleoprotein</keyword>
<keyword id="KW-0689">Ribosomal protein</keyword>
<keyword id="KW-0694">RNA-binding</keyword>
<keyword id="KW-0699">rRNA-binding</keyword>
<name>RS4_CARGR</name>
<evidence type="ECO:0000305" key="1"/>
<dbReference type="EMBL" id="AM048927">
    <property type="protein sequence ID" value="CAJ17165.1"/>
    <property type="molecule type" value="mRNA"/>
</dbReference>
<dbReference type="SMR" id="Q4GXU6"/>
<dbReference type="GO" id="GO:0022627">
    <property type="term" value="C:cytosolic small ribosomal subunit"/>
    <property type="evidence" value="ECO:0007669"/>
    <property type="project" value="TreeGrafter"/>
</dbReference>
<dbReference type="GO" id="GO:0019843">
    <property type="term" value="F:rRNA binding"/>
    <property type="evidence" value="ECO:0007669"/>
    <property type="project" value="UniProtKB-KW"/>
</dbReference>
<dbReference type="GO" id="GO:0003735">
    <property type="term" value="F:structural constituent of ribosome"/>
    <property type="evidence" value="ECO:0007669"/>
    <property type="project" value="InterPro"/>
</dbReference>
<dbReference type="GO" id="GO:0006412">
    <property type="term" value="P:translation"/>
    <property type="evidence" value="ECO:0007669"/>
    <property type="project" value="InterPro"/>
</dbReference>
<dbReference type="CDD" id="cd06087">
    <property type="entry name" value="KOW_RPS4"/>
    <property type="match status" value="1"/>
</dbReference>
<dbReference type="CDD" id="cd00165">
    <property type="entry name" value="S4"/>
    <property type="match status" value="1"/>
</dbReference>
<dbReference type="FunFam" id="2.30.30.30:FF:000005">
    <property type="entry name" value="40S ribosomal protein S4"/>
    <property type="match status" value="1"/>
</dbReference>
<dbReference type="FunFam" id="2.40.50.740:FF:000001">
    <property type="entry name" value="40S ribosomal protein S4"/>
    <property type="match status" value="1"/>
</dbReference>
<dbReference type="FunFam" id="3.10.290.10:FF:000002">
    <property type="entry name" value="40S ribosomal protein S4"/>
    <property type="match status" value="1"/>
</dbReference>
<dbReference type="Gene3D" id="2.30.30.30">
    <property type="match status" value="1"/>
</dbReference>
<dbReference type="Gene3D" id="2.40.50.740">
    <property type="match status" value="1"/>
</dbReference>
<dbReference type="Gene3D" id="3.10.290.10">
    <property type="entry name" value="RNA-binding S4 domain"/>
    <property type="match status" value="1"/>
</dbReference>
<dbReference type="HAMAP" id="MF_00485">
    <property type="entry name" value="Ribosomal_eS4"/>
    <property type="match status" value="1"/>
</dbReference>
<dbReference type="InterPro" id="IPR005824">
    <property type="entry name" value="KOW"/>
</dbReference>
<dbReference type="InterPro" id="IPR014722">
    <property type="entry name" value="Rib_uL2_dom2"/>
</dbReference>
<dbReference type="InterPro" id="IPR000876">
    <property type="entry name" value="Ribosomal_eS4"/>
</dbReference>
<dbReference type="InterPro" id="IPR032277">
    <property type="entry name" value="Ribosomal_eS4_C"/>
</dbReference>
<dbReference type="InterPro" id="IPR013845">
    <property type="entry name" value="Ribosomal_eS4_central_region"/>
</dbReference>
<dbReference type="InterPro" id="IPR038237">
    <property type="entry name" value="Ribosomal_eS4_central_sf"/>
</dbReference>
<dbReference type="InterPro" id="IPR041982">
    <property type="entry name" value="Ribosomal_eS4_KOW"/>
</dbReference>
<dbReference type="InterPro" id="IPR013843">
    <property type="entry name" value="Ribosomal_eS4_N"/>
</dbReference>
<dbReference type="InterPro" id="IPR018199">
    <property type="entry name" value="Ribosomal_eS4_N_CS"/>
</dbReference>
<dbReference type="InterPro" id="IPR002942">
    <property type="entry name" value="S4_RNA-bd"/>
</dbReference>
<dbReference type="InterPro" id="IPR036986">
    <property type="entry name" value="S4_RNA-bd_sf"/>
</dbReference>
<dbReference type="PANTHER" id="PTHR11581">
    <property type="entry name" value="30S/40S RIBOSOMAL PROTEIN S4"/>
    <property type="match status" value="1"/>
</dbReference>
<dbReference type="PANTHER" id="PTHR11581:SF0">
    <property type="entry name" value="SMALL RIBOSOMAL SUBUNIT PROTEIN ES4"/>
    <property type="match status" value="1"/>
</dbReference>
<dbReference type="Pfam" id="PF16121">
    <property type="entry name" value="40S_S4_C"/>
    <property type="match status" value="1"/>
</dbReference>
<dbReference type="Pfam" id="PF00467">
    <property type="entry name" value="KOW"/>
    <property type="match status" value="1"/>
</dbReference>
<dbReference type="Pfam" id="PF00900">
    <property type="entry name" value="Ribosomal_S4e"/>
    <property type="match status" value="1"/>
</dbReference>
<dbReference type="Pfam" id="PF08071">
    <property type="entry name" value="RS4NT"/>
    <property type="match status" value="1"/>
</dbReference>
<dbReference type="Pfam" id="PF01479">
    <property type="entry name" value="S4"/>
    <property type="match status" value="1"/>
</dbReference>
<dbReference type="PIRSF" id="PIRSF002116">
    <property type="entry name" value="Ribosomal_S4"/>
    <property type="match status" value="1"/>
</dbReference>
<dbReference type="SMART" id="SM00363">
    <property type="entry name" value="S4"/>
    <property type="match status" value="1"/>
</dbReference>
<dbReference type="SUPFAM" id="SSF55174">
    <property type="entry name" value="Alpha-L RNA-binding motif"/>
    <property type="match status" value="1"/>
</dbReference>
<dbReference type="PROSITE" id="PS00528">
    <property type="entry name" value="RIBOSOMAL_S4E"/>
    <property type="match status" value="1"/>
</dbReference>
<dbReference type="PROSITE" id="PS50889">
    <property type="entry name" value="S4"/>
    <property type="match status" value="1"/>
</dbReference>
<feature type="chain" id="PRO_0000260287" description="Small ribosomal subunit protein eS4">
    <location>
        <begin position="1"/>
        <end position="261"/>
    </location>
</feature>
<feature type="domain" description="S4 RNA-binding">
    <location>
        <begin position="42"/>
        <end position="104"/>
    </location>
</feature>